<name>LPXD_ECOL6</name>
<dbReference type="EC" id="2.3.1.191" evidence="2"/>
<dbReference type="EMBL" id="AE014075">
    <property type="protein sequence ID" value="AAN78708.1"/>
    <property type="molecule type" value="Genomic_DNA"/>
</dbReference>
<dbReference type="RefSeq" id="WP_001139282.1">
    <property type="nucleotide sequence ID" value="NZ_CP051263.1"/>
</dbReference>
<dbReference type="RefSeq" id="WP_001139299.1">
    <property type="nucleotide sequence ID" value="NC_004431.1"/>
</dbReference>
<dbReference type="SMR" id="P65322"/>
<dbReference type="STRING" id="199310.c0216"/>
<dbReference type="GeneID" id="93777246"/>
<dbReference type="KEGG" id="ecc:c0216"/>
<dbReference type="eggNOG" id="COG1044">
    <property type="taxonomic scope" value="Bacteria"/>
</dbReference>
<dbReference type="HOGENOM" id="CLU_049865_0_1_6"/>
<dbReference type="BioCyc" id="ECOL199310:C0216-MONOMER"/>
<dbReference type="UniPathway" id="UPA00359">
    <property type="reaction ID" value="UER00479"/>
</dbReference>
<dbReference type="Proteomes" id="UP000001410">
    <property type="component" value="Chromosome"/>
</dbReference>
<dbReference type="GO" id="GO:0016020">
    <property type="term" value="C:membrane"/>
    <property type="evidence" value="ECO:0007669"/>
    <property type="project" value="GOC"/>
</dbReference>
<dbReference type="GO" id="GO:0016410">
    <property type="term" value="F:N-acyltransferase activity"/>
    <property type="evidence" value="ECO:0007669"/>
    <property type="project" value="InterPro"/>
</dbReference>
<dbReference type="GO" id="GO:0103118">
    <property type="term" value="F:UDP-3-O-(R-3-hydroxymyristoyl)-glucosamine N-acyltransferase activity"/>
    <property type="evidence" value="ECO:0007669"/>
    <property type="project" value="UniProtKB-EC"/>
</dbReference>
<dbReference type="GO" id="GO:0009245">
    <property type="term" value="P:lipid A biosynthetic process"/>
    <property type="evidence" value="ECO:0007669"/>
    <property type="project" value="UniProtKB-UniRule"/>
</dbReference>
<dbReference type="CDD" id="cd03352">
    <property type="entry name" value="LbH_LpxD"/>
    <property type="match status" value="1"/>
</dbReference>
<dbReference type="FunFam" id="1.20.5.170:FF:000032">
    <property type="entry name" value="UDP-3-O-(3-hydroxymyristoyl)glucosamine N-acyltransferase"/>
    <property type="match status" value="1"/>
</dbReference>
<dbReference type="FunFam" id="2.160.10.10:FF:000005">
    <property type="entry name" value="UDP-3-O-(3-hydroxymyristoyl)glucosamine N-acyltransferase"/>
    <property type="match status" value="1"/>
</dbReference>
<dbReference type="FunFam" id="3.40.1390.10:FF:000001">
    <property type="entry name" value="UDP-3-O-(3-hydroxymyristoyl)glucosamine N-acyltransferase"/>
    <property type="match status" value="1"/>
</dbReference>
<dbReference type="Gene3D" id="1.20.5.170">
    <property type="match status" value="1"/>
</dbReference>
<dbReference type="Gene3D" id="2.160.10.10">
    <property type="entry name" value="Hexapeptide repeat proteins"/>
    <property type="match status" value="1"/>
</dbReference>
<dbReference type="Gene3D" id="3.40.1390.10">
    <property type="entry name" value="MurE/MurF, N-terminal domain"/>
    <property type="match status" value="1"/>
</dbReference>
<dbReference type="HAMAP" id="MF_00523">
    <property type="entry name" value="LpxD"/>
    <property type="match status" value="1"/>
</dbReference>
<dbReference type="InterPro" id="IPR001451">
    <property type="entry name" value="Hexapep"/>
</dbReference>
<dbReference type="InterPro" id="IPR018357">
    <property type="entry name" value="Hexapep_transf_CS"/>
</dbReference>
<dbReference type="InterPro" id="IPR007691">
    <property type="entry name" value="LpxD"/>
</dbReference>
<dbReference type="InterPro" id="IPR011004">
    <property type="entry name" value="Trimer_LpxA-like_sf"/>
</dbReference>
<dbReference type="InterPro" id="IPR020573">
    <property type="entry name" value="UDP_GlcNAc_AcTrfase_non-rep"/>
</dbReference>
<dbReference type="NCBIfam" id="TIGR01853">
    <property type="entry name" value="lipid_A_lpxD"/>
    <property type="match status" value="1"/>
</dbReference>
<dbReference type="NCBIfam" id="NF002060">
    <property type="entry name" value="PRK00892.1"/>
    <property type="match status" value="1"/>
</dbReference>
<dbReference type="PANTHER" id="PTHR43378">
    <property type="entry name" value="UDP-3-O-ACYLGLUCOSAMINE N-ACYLTRANSFERASE"/>
    <property type="match status" value="1"/>
</dbReference>
<dbReference type="PANTHER" id="PTHR43378:SF2">
    <property type="entry name" value="UDP-3-O-ACYLGLUCOSAMINE N-ACYLTRANSFERASE 1, MITOCHONDRIAL-RELATED"/>
    <property type="match status" value="1"/>
</dbReference>
<dbReference type="Pfam" id="PF00132">
    <property type="entry name" value="Hexapep"/>
    <property type="match status" value="3"/>
</dbReference>
<dbReference type="Pfam" id="PF04613">
    <property type="entry name" value="LpxD"/>
    <property type="match status" value="1"/>
</dbReference>
<dbReference type="SUPFAM" id="SSF51161">
    <property type="entry name" value="Trimeric LpxA-like enzymes"/>
    <property type="match status" value="1"/>
</dbReference>
<dbReference type="PROSITE" id="PS00101">
    <property type="entry name" value="HEXAPEP_TRANSFERASES"/>
    <property type="match status" value="4"/>
</dbReference>
<organism>
    <name type="scientific">Escherichia coli O6:H1 (strain CFT073 / ATCC 700928 / UPEC)</name>
    <dbReference type="NCBI Taxonomy" id="199310"/>
    <lineage>
        <taxon>Bacteria</taxon>
        <taxon>Pseudomonadati</taxon>
        <taxon>Pseudomonadota</taxon>
        <taxon>Gammaproteobacteria</taxon>
        <taxon>Enterobacterales</taxon>
        <taxon>Enterobacteriaceae</taxon>
        <taxon>Escherichia</taxon>
    </lineage>
</organism>
<reference key="1">
    <citation type="journal article" date="2002" name="Proc. Natl. Acad. Sci. U.S.A.">
        <title>Extensive mosaic structure revealed by the complete genome sequence of uropathogenic Escherichia coli.</title>
        <authorList>
            <person name="Welch R.A."/>
            <person name="Burland V."/>
            <person name="Plunkett G. III"/>
            <person name="Redford P."/>
            <person name="Roesch P."/>
            <person name="Rasko D."/>
            <person name="Buckles E.L."/>
            <person name="Liou S.-R."/>
            <person name="Boutin A."/>
            <person name="Hackett J."/>
            <person name="Stroud D."/>
            <person name="Mayhew G.F."/>
            <person name="Rose D.J."/>
            <person name="Zhou S."/>
            <person name="Schwartz D.C."/>
            <person name="Perna N.T."/>
            <person name="Mobley H.L.T."/>
            <person name="Donnenberg M.S."/>
            <person name="Blattner F.R."/>
        </authorList>
    </citation>
    <scope>NUCLEOTIDE SEQUENCE [LARGE SCALE GENOMIC DNA]</scope>
    <source>
        <strain>CFT073 / ATCC 700928 / UPEC</strain>
    </source>
</reference>
<comment type="function">
    <text evidence="2">Catalyzes the N-acylation of UDP-3-O-(hydroxytetradecanoyl)glucosamine using 3-hydroxytetradecanoyl-ACP as the acyl donor. Is involved in the biosynthesis of lipid A, a phosphorylated glycolipid that anchors the lipopolysaccharide to the outer membrane of the cell.</text>
</comment>
<comment type="catalytic activity">
    <reaction evidence="2">
        <text>a UDP-3-O-[(3R)-3-hydroxyacyl]-alpha-D-glucosamine + a (3R)-hydroxyacyl-[ACP] = a UDP-2-N,3-O-bis[(3R)-3-hydroxyacyl]-alpha-D-glucosamine + holo-[ACP] + H(+)</text>
        <dbReference type="Rhea" id="RHEA:53836"/>
        <dbReference type="Rhea" id="RHEA-COMP:9685"/>
        <dbReference type="Rhea" id="RHEA-COMP:9945"/>
        <dbReference type="ChEBI" id="CHEBI:15378"/>
        <dbReference type="ChEBI" id="CHEBI:64479"/>
        <dbReference type="ChEBI" id="CHEBI:78827"/>
        <dbReference type="ChEBI" id="CHEBI:137740"/>
        <dbReference type="ChEBI" id="CHEBI:137748"/>
        <dbReference type="EC" id="2.3.1.191"/>
    </reaction>
</comment>
<comment type="catalytic activity">
    <reaction evidence="2">
        <text>UDP-3-O-[(3R)-3-hydroxytetradecanoyl]-alpha-D-glucosamine + (3R)-hydroxytetradecanoyl-[ACP] = UDP-2-N,3-O-bis[(3R)-3-hydroxytetradecanoyl]-alpha-D-glucosamine + holo-[ACP] + H(+)</text>
        <dbReference type="Rhea" id="RHEA:17817"/>
        <dbReference type="Rhea" id="RHEA-COMP:9646"/>
        <dbReference type="Rhea" id="RHEA-COMP:9685"/>
        <dbReference type="ChEBI" id="CHEBI:15378"/>
        <dbReference type="ChEBI" id="CHEBI:64479"/>
        <dbReference type="ChEBI" id="CHEBI:71573"/>
        <dbReference type="ChEBI" id="CHEBI:78474"/>
        <dbReference type="ChEBI" id="CHEBI:78847"/>
    </reaction>
</comment>
<comment type="pathway">
    <text evidence="2">Glycolipid biosynthesis; lipid IV(A) biosynthesis; lipid IV(A) from (3R)-3-hydroxytetradecanoyl-[acyl-carrier-protein] and UDP-N-acetyl-alpha-D-glucosamine: step 3/6.</text>
</comment>
<comment type="subunit">
    <text evidence="2">Homotrimer.</text>
</comment>
<comment type="similarity">
    <text evidence="2">Belongs to the transferase hexapeptide repeat family. LpxD subfamily.</text>
</comment>
<accession>P65322</accession>
<accession>P58610</accession>
<proteinExistence type="inferred from homology"/>
<gene>
    <name evidence="2" type="primary">lpxD</name>
    <name type="ordered locus">c0216</name>
</gene>
<protein>
    <recommendedName>
        <fullName evidence="2">UDP-3-O-(3-hydroxymyristoyl)glucosamine N-acyltransferase</fullName>
        <shortName evidence="2">UDP-3-O-(3-OHC14)-GlcN N-acyltransferase</shortName>
        <ecNumber evidence="2">2.3.1.191</ecNumber>
    </recommendedName>
    <alternativeName>
        <fullName evidence="2">UDP-3-O-(3-hydroxytetradecanoyl)glucosamine N-acyltransferase</fullName>
    </alternativeName>
</protein>
<sequence length="341" mass="36024">MPSIRLADLAQQLDAELHGDGDIVITGVASMQSAQTGHITFMVNPKYREHLGLCQASAVVMTQDDLPFAKSAALVVKNPYLTYARMAQILDTTPQPAQNIAPSAVIDATAKLGNNVSIGANAVIESGVELGDNVIIGAGCFVGKNSKIGAGSRLWANVTIYHEIQIGQNCLIQSGTVVGADGFGYANDRGNWVKIPQIGRVIIGDRVEIGACTTIDRGALDDTVIGNGVIIDNQCQIAHNVVIGDNTAVAGGVIMAGSLKIGRYCMIGGASVINGHMEICDKVTVTGMGMVMRPITEPGVYSSGIPLQPNKVWRKTAALVMNIDDMSKRLKSLERKVNQQD</sequence>
<keyword id="KW-0012">Acyltransferase</keyword>
<keyword id="KW-0441">Lipid A biosynthesis</keyword>
<keyword id="KW-0444">Lipid biosynthesis</keyword>
<keyword id="KW-0443">Lipid metabolism</keyword>
<keyword id="KW-1185">Reference proteome</keyword>
<keyword id="KW-0677">Repeat</keyword>
<keyword id="KW-0808">Transferase</keyword>
<evidence type="ECO:0000250" key="1"/>
<evidence type="ECO:0000255" key="2">
    <source>
        <dbReference type="HAMAP-Rule" id="MF_00523"/>
    </source>
</evidence>
<feature type="initiator methionine" description="Removed" evidence="1">
    <location>
        <position position="1"/>
    </location>
</feature>
<feature type="chain" id="PRO_0000059670" description="UDP-3-O-(3-hydroxymyristoyl)glucosamine N-acyltransferase">
    <location>
        <begin position="2"/>
        <end position="341"/>
    </location>
</feature>
<feature type="active site" description="Proton acceptor" evidence="2">
    <location>
        <position position="239"/>
    </location>
</feature>